<organism>
    <name type="scientific">Polyspilota aeruginosa</name>
    <name type="common">Madagascan marbled praying mantis</name>
    <dbReference type="NCBI Taxonomy" id="444978"/>
    <lineage>
        <taxon>Eukaryota</taxon>
        <taxon>Metazoa</taxon>
        <taxon>Ecdysozoa</taxon>
        <taxon>Arthropoda</taxon>
        <taxon>Hexapoda</taxon>
        <taxon>Insecta</taxon>
        <taxon>Pterygota</taxon>
        <taxon>Neoptera</taxon>
        <taxon>Polyneoptera</taxon>
        <taxon>Dictyoptera</taxon>
        <taxon>Mantodea</taxon>
        <taxon>Eumantodea</taxon>
        <taxon>Mantoidea</taxon>
        <taxon>Mantidae</taxon>
        <taxon>Tenoderinae</taxon>
        <taxon>Tenoderini</taxon>
        <taxon>Polyspilota</taxon>
    </lineage>
</organism>
<evidence type="ECO:0000250" key="1">
    <source>
        <dbReference type="UniProtKB" id="P83923"/>
    </source>
</evidence>
<evidence type="ECO:0000250" key="2">
    <source>
        <dbReference type="UniProtKB" id="P84375"/>
    </source>
</evidence>
<evidence type="ECO:0000255" key="3"/>
<evidence type="ECO:0000269" key="4">
    <source>
    </source>
</evidence>
<evidence type="ECO:0000303" key="5">
    <source>
    </source>
</evidence>
<evidence type="ECO:0000305" key="6"/>
<proteinExistence type="evidence at protein level"/>
<sequence length="9" mass="1068">QTLIPMPRL</sequence>
<keyword id="KW-0027">Amidation</keyword>
<keyword id="KW-0903">Direct protein sequencing</keyword>
<keyword id="KW-0527">Neuropeptide</keyword>
<keyword id="KW-0873">Pyrrolidone carboxylic acid</keyword>
<keyword id="KW-0964">Secreted</keyword>
<reference evidence="6" key="1">
    <citation type="journal article" date="2010" name="Peptides">
        <title>CAPA-peptides of praying mantids (Mantodea).</title>
        <authorList>
            <person name="Koehler R."/>
            <person name="Predel R."/>
        </authorList>
    </citation>
    <scope>PROTEIN SEQUENCE</scope>
    <scope>MASS SPECTROMETRY</scope>
    <scope>PYROGLUTAMATE FORMATION AT GLN-1</scope>
    <scope>AMIDATION AT LEU-9</scope>
    <source>
        <tissue evidence="4">Abdominal perisympathetic organs</tissue>
    </source>
</reference>
<dbReference type="GO" id="GO:0005576">
    <property type="term" value="C:extracellular region"/>
    <property type="evidence" value="ECO:0007669"/>
    <property type="project" value="UniProtKB-SubCell"/>
</dbReference>
<dbReference type="GO" id="GO:0007218">
    <property type="term" value="P:neuropeptide signaling pathway"/>
    <property type="evidence" value="ECO:0007669"/>
    <property type="project" value="UniProtKB-KW"/>
</dbReference>
<name>PVK1_POLAI</name>
<comment type="function">
    <text evidence="1">Mediates visceral muscle contractile activity (myotropic activity).</text>
</comment>
<comment type="subcellular location">
    <subcellularLocation>
        <location evidence="2">Secreted</location>
    </subcellularLocation>
</comment>
<comment type="mass spectrometry" mass="1067.6" error="0.01" method="MALDI" evidence="4"/>
<comment type="mass spectrometry" mass="1050.6" error="0.01" method="MALDI" evidence="4">
    <text>With pyroglutamate at Gln-1.</text>
</comment>
<comment type="similarity">
    <text evidence="3">Belongs to the periviscerokinin family.</text>
</comment>
<protein>
    <recommendedName>
        <fullName evidence="5">Periviscerokinin-1</fullName>
        <shortName evidence="5">Polae-PVK-1</shortName>
    </recommendedName>
</protein>
<feature type="peptide" id="PRO_0000395575" description="Periviscerokinin-1" evidence="4">
    <location>
        <begin position="1"/>
        <end position="9"/>
    </location>
</feature>
<feature type="modified residue" description="Pyrrolidone carboxylic acid; partial" evidence="4">
    <location>
        <position position="1"/>
    </location>
</feature>
<feature type="modified residue" description="Leucine amide" evidence="4">
    <location>
        <position position="9"/>
    </location>
</feature>
<feature type="unsure residue" description="L or I" evidence="4">
    <location>
        <position position="3"/>
    </location>
</feature>
<feature type="unsure residue" description="I or L" evidence="4">
    <location>
        <position position="4"/>
    </location>
</feature>
<feature type="unsure residue" description="L or I" evidence="4">
    <location>
        <position position="9"/>
    </location>
</feature>
<accession>P86678</accession>